<keyword id="KW-0004">4Fe-4S</keyword>
<keyword id="KW-0963">Cytoplasm</keyword>
<keyword id="KW-1015">Disulfide bond</keyword>
<keyword id="KW-0408">Iron</keyword>
<keyword id="KW-0411">Iron-sulfur</keyword>
<keyword id="KW-0479">Metal-binding</keyword>
<keyword id="KW-0489">Methyltransferase</keyword>
<keyword id="KW-0698">rRNA processing</keyword>
<keyword id="KW-0949">S-adenosyl-L-methionine</keyword>
<keyword id="KW-0808">Transferase</keyword>
<keyword id="KW-0819">tRNA processing</keyword>
<name>RLMN_TREPS</name>
<proteinExistence type="inferred from homology"/>
<organism>
    <name type="scientific">Treponema pallidum subsp. pallidum (strain SS14)</name>
    <dbReference type="NCBI Taxonomy" id="455434"/>
    <lineage>
        <taxon>Bacteria</taxon>
        <taxon>Pseudomonadati</taxon>
        <taxon>Spirochaetota</taxon>
        <taxon>Spirochaetia</taxon>
        <taxon>Spirochaetales</taxon>
        <taxon>Treponemataceae</taxon>
        <taxon>Treponema</taxon>
    </lineage>
</organism>
<dbReference type="EC" id="2.1.1.192" evidence="1"/>
<dbReference type="EMBL" id="CP000805">
    <property type="protein sequence ID" value="ACD70495.1"/>
    <property type="molecule type" value="Genomic_DNA"/>
</dbReference>
<dbReference type="RefSeq" id="WP_010881517.1">
    <property type="nucleotide sequence ID" value="NC_021508.1"/>
</dbReference>
<dbReference type="SMR" id="B2S216"/>
<dbReference type="GeneID" id="93875863"/>
<dbReference type="KEGG" id="tpp:TPASS_0068"/>
<dbReference type="PATRIC" id="fig|455434.6.peg.66"/>
<dbReference type="Proteomes" id="UP000001202">
    <property type="component" value="Chromosome"/>
</dbReference>
<dbReference type="GO" id="GO:0005737">
    <property type="term" value="C:cytoplasm"/>
    <property type="evidence" value="ECO:0007669"/>
    <property type="project" value="UniProtKB-SubCell"/>
</dbReference>
<dbReference type="GO" id="GO:0051539">
    <property type="term" value="F:4 iron, 4 sulfur cluster binding"/>
    <property type="evidence" value="ECO:0007669"/>
    <property type="project" value="UniProtKB-UniRule"/>
</dbReference>
<dbReference type="GO" id="GO:0046872">
    <property type="term" value="F:metal ion binding"/>
    <property type="evidence" value="ECO:0007669"/>
    <property type="project" value="UniProtKB-KW"/>
</dbReference>
<dbReference type="GO" id="GO:0070040">
    <property type="term" value="F:rRNA (adenine(2503)-C2-)-methyltransferase activity"/>
    <property type="evidence" value="ECO:0007669"/>
    <property type="project" value="UniProtKB-UniRule"/>
</dbReference>
<dbReference type="GO" id="GO:0019843">
    <property type="term" value="F:rRNA binding"/>
    <property type="evidence" value="ECO:0007669"/>
    <property type="project" value="UniProtKB-UniRule"/>
</dbReference>
<dbReference type="GO" id="GO:0002935">
    <property type="term" value="F:tRNA (adenine(37)-C2)-methyltransferase activity"/>
    <property type="evidence" value="ECO:0007669"/>
    <property type="project" value="UniProtKB-UniRule"/>
</dbReference>
<dbReference type="GO" id="GO:0000049">
    <property type="term" value="F:tRNA binding"/>
    <property type="evidence" value="ECO:0007669"/>
    <property type="project" value="UniProtKB-UniRule"/>
</dbReference>
<dbReference type="GO" id="GO:0070475">
    <property type="term" value="P:rRNA base methylation"/>
    <property type="evidence" value="ECO:0007669"/>
    <property type="project" value="UniProtKB-UniRule"/>
</dbReference>
<dbReference type="GO" id="GO:0030488">
    <property type="term" value="P:tRNA methylation"/>
    <property type="evidence" value="ECO:0007669"/>
    <property type="project" value="UniProtKB-UniRule"/>
</dbReference>
<dbReference type="CDD" id="cd01335">
    <property type="entry name" value="Radical_SAM"/>
    <property type="match status" value="1"/>
</dbReference>
<dbReference type="Gene3D" id="1.10.150.530">
    <property type="match status" value="1"/>
</dbReference>
<dbReference type="Gene3D" id="3.20.20.70">
    <property type="entry name" value="Aldolase class I"/>
    <property type="match status" value="1"/>
</dbReference>
<dbReference type="HAMAP" id="MF_01849">
    <property type="entry name" value="RNA_methyltr_RlmN"/>
    <property type="match status" value="1"/>
</dbReference>
<dbReference type="InterPro" id="IPR013785">
    <property type="entry name" value="Aldolase_TIM"/>
</dbReference>
<dbReference type="InterPro" id="IPR040072">
    <property type="entry name" value="Methyltransferase_A"/>
</dbReference>
<dbReference type="InterPro" id="IPR048641">
    <property type="entry name" value="RlmN_N"/>
</dbReference>
<dbReference type="InterPro" id="IPR027492">
    <property type="entry name" value="RNA_MTrfase_RlmN"/>
</dbReference>
<dbReference type="InterPro" id="IPR004383">
    <property type="entry name" value="rRNA_lsu_MTrfase_RlmN/Cfr"/>
</dbReference>
<dbReference type="InterPro" id="IPR007197">
    <property type="entry name" value="rSAM"/>
</dbReference>
<dbReference type="NCBIfam" id="TIGR00048">
    <property type="entry name" value="rRNA_mod_RlmN"/>
    <property type="match status" value="1"/>
</dbReference>
<dbReference type="PANTHER" id="PTHR30544">
    <property type="entry name" value="23S RRNA METHYLTRANSFERASE"/>
    <property type="match status" value="1"/>
</dbReference>
<dbReference type="PANTHER" id="PTHR30544:SF5">
    <property type="entry name" value="RADICAL SAM CORE DOMAIN-CONTAINING PROTEIN"/>
    <property type="match status" value="1"/>
</dbReference>
<dbReference type="Pfam" id="PF04055">
    <property type="entry name" value="Radical_SAM"/>
    <property type="match status" value="1"/>
</dbReference>
<dbReference type="Pfam" id="PF21016">
    <property type="entry name" value="RlmN_N"/>
    <property type="match status" value="1"/>
</dbReference>
<dbReference type="PIRSF" id="PIRSF006004">
    <property type="entry name" value="CHP00048"/>
    <property type="match status" value="1"/>
</dbReference>
<dbReference type="SFLD" id="SFLDF00275">
    <property type="entry name" value="adenosine_C2_methyltransferase"/>
    <property type="match status" value="1"/>
</dbReference>
<dbReference type="SFLD" id="SFLDG01062">
    <property type="entry name" value="methyltransferase_(Class_A)"/>
    <property type="match status" value="1"/>
</dbReference>
<dbReference type="SUPFAM" id="SSF102114">
    <property type="entry name" value="Radical SAM enzymes"/>
    <property type="match status" value="1"/>
</dbReference>
<dbReference type="PROSITE" id="PS51918">
    <property type="entry name" value="RADICAL_SAM"/>
    <property type="match status" value="1"/>
</dbReference>
<reference key="1">
    <citation type="journal article" date="2008" name="BMC Microbiol.">
        <title>Complete genome sequence of Treponema pallidum ssp. pallidum strain SS14 determined with oligonucleotide arrays.</title>
        <authorList>
            <person name="Matejkova P."/>
            <person name="Strouhal M."/>
            <person name="Smajs D."/>
            <person name="Norris S.J."/>
            <person name="Palzkill T."/>
            <person name="Petrosino J.F."/>
            <person name="Sodergren E."/>
            <person name="Norton J.E."/>
            <person name="Singh J."/>
            <person name="Richmond T.A."/>
            <person name="Molla M.N."/>
            <person name="Albert T.J."/>
            <person name="Weinstock G.M."/>
        </authorList>
    </citation>
    <scope>NUCLEOTIDE SEQUENCE [LARGE SCALE GENOMIC DNA]</scope>
    <source>
        <strain>SS14</strain>
    </source>
</reference>
<accession>B2S216</accession>
<sequence length="340" mass="37520">MEWCCALSGLLPEEIQKVCAFAERFRGVQVFRWIAAGCTDFHAMSDLSSETRARLARACVISDTRVYTTLRDVDGTLKLGIELKDKRRVEAVLLVDQVSRKTACLSCQVGCPMACAFCQTGQLGFARNLSASEIVEQFLHLERCVGTLDNVVFMGMGEPMLNLDAVCRAIEILSHPQGRDLSEKRITISTSGHCRGIYSLADRALQVRLAVSLTTANAPLRARLMPRAAHDSLAKLKSAIRYFNEKSGKRVTLELALMRGVNTSERHAQEVIDFAHGLNVHVNLIPWNPVASIHFETPREVEVAHFEALLMRARIPVTRRYQRGNGIGGACGQLGKTAGV</sequence>
<evidence type="ECO:0000255" key="1">
    <source>
        <dbReference type="HAMAP-Rule" id="MF_01849"/>
    </source>
</evidence>
<evidence type="ECO:0000255" key="2">
    <source>
        <dbReference type="PROSITE-ProRule" id="PRU01266"/>
    </source>
</evidence>
<protein>
    <recommendedName>
        <fullName evidence="1">Probable dual-specificity RNA methyltransferase RlmN</fullName>
        <ecNumber evidence="1">2.1.1.192</ecNumber>
    </recommendedName>
    <alternativeName>
        <fullName evidence="1">23S rRNA (adenine(2503)-C(2))-methyltransferase</fullName>
    </alternativeName>
    <alternativeName>
        <fullName evidence="1">23S rRNA m2A2503 methyltransferase</fullName>
    </alternativeName>
    <alternativeName>
        <fullName evidence="1">Ribosomal RNA large subunit methyltransferase N</fullName>
    </alternativeName>
    <alternativeName>
        <fullName evidence="1">tRNA (adenine(37)-C(2))-methyltransferase</fullName>
    </alternativeName>
    <alternativeName>
        <fullName evidence="1">tRNA m2A37 methyltransferase</fullName>
    </alternativeName>
</protein>
<comment type="function">
    <text evidence="1">Specifically methylates position 2 of adenine 2503 in 23S rRNA and position 2 of adenine 37 in tRNAs.</text>
</comment>
<comment type="catalytic activity">
    <reaction evidence="1">
        <text>adenosine(2503) in 23S rRNA + 2 reduced [2Fe-2S]-[ferredoxin] + 2 S-adenosyl-L-methionine = 2-methyladenosine(2503) in 23S rRNA + 5'-deoxyadenosine + L-methionine + 2 oxidized [2Fe-2S]-[ferredoxin] + S-adenosyl-L-homocysteine</text>
        <dbReference type="Rhea" id="RHEA:42916"/>
        <dbReference type="Rhea" id="RHEA-COMP:10000"/>
        <dbReference type="Rhea" id="RHEA-COMP:10001"/>
        <dbReference type="Rhea" id="RHEA-COMP:10152"/>
        <dbReference type="Rhea" id="RHEA-COMP:10282"/>
        <dbReference type="ChEBI" id="CHEBI:17319"/>
        <dbReference type="ChEBI" id="CHEBI:33737"/>
        <dbReference type="ChEBI" id="CHEBI:33738"/>
        <dbReference type="ChEBI" id="CHEBI:57844"/>
        <dbReference type="ChEBI" id="CHEBI:57856"/>
        <dbReference type="ChEBI" id="CHEBI:59789"/>
        <dbReference type="ChEBI" id="CHEBI:74411"/>
        <dbReference type="ChEBI" id="CHEBI:74497"/>
        <dbReference type="EC" id="2.1.1.192"/>
    </reaction>
</comment>
<comment type="catalytic activity">
    <reaction evidence="1">
        <text>adenosine(37) in tRNA + 2 reduced [2Fe-2S]-[ferredoxin] + 2 S-adenosyl-L-methionine = 2-methyladenosine(37) in tRNA + 5'-deoxyadenosine + L-methionine + 2 oxidized [2Fe-2S]-[ferredoxin] + S-adenosyl-L-homocysteine</text>
        <dbReference type="Rhea" id="RHEA:43332"/>
        <dbReference type="Rhea" id="RHEA-COMP:10000"/>
        <dbReference type="Rhea" id="RHEA-COMP:10001"/>
        <dbReference type="Rhea" id="RHEA-COMP:10162"/>
        <dbReference type="Rhea" id="RHEA-COMP:10485"/>
        <dbReference type="ChEBI" id="CHEBI:17319"/>
        <dbReference type="ChEBI" id="CHEBI:33737"/>
        <dbReference type="ChEBI" id="CHEBI:33738"/>
        <dbReference type="ChEBI" id="CHEBI:57844"/>
        <dbReference type="ChEBI" id="CHEBI:57856"/>
        <dbReference type="ChEBI" id="CHEBI:59789"/>
        <dbReference type="ChEBI" id="CHEBI:74411"/>
        <dbReference type="ChEBI" id="CHEBI:74497"/>
        <dbReference type="EC" id="2.1.1.192"/>
    </reaction>
</comment>
<comment type="cofactor">
    <cofactor evidence="1">
        <name>[4Fe-4S] cluster</name>
        <dbReference type="ChEBI" id="CHEBI:49883"/>
    </cofactor>
    <text evidence="1">Binds 1 [4Fe-4S] cluster. The cluster is coordinated with 3 cysteines and an exchangeable S-adenosyl-L-methionine.</text>
</comment>
<comment type="subcellular location">
    <subcellularLocation>
        <location evidence="1">Cytoplasm</location>
    </subcellularLocation>
</comment>
<comment type="miscellaneous">
    <text evidence="1">Reaction proceeds by a ping-pong mechanism involving intermediate methylation of a conserved cysteine residue.</text>
</comment>
<comment type="similarity">
    <text evidence="1">Belongs to the radical SAM superfamily. RlmN family.</text>
</comment>
<feature type="chain" id="PRO_0000350510" description="Probable dual-specificity RNA methyltransferase RlmN">
    <location>
        <begin position="1"/>
        <end position="340"/>
    </location>
</feature>
<feature type="domain" description="Radical SAM core" evidence="2">
    <location>
        <begin position="97"/>
        <end position="325"/>
    </location>
</feature>
<feature type="active site" description="Proton acceptor" evidence="1">
    <location>
        <position position="90"/>
    </location>
</feature>
<feature type="active site" description="S-methylcysteine intermediate" evidence="1">
    <location>
        <position position="331"/>
    </location>
</feature>
<feature type="binding site" evidence="1">
    <location>
        <position position="111"/>
    </location>
    <ligand>
        <name>[4Fe-4S] cluster</name>
        <dbReference type="ChEBI" id="CHEBI:49883"/>
        <note>4Fe-4S-S-AdoMet</note>
    </ligand>
</feature>
<feature type="binding site" evidence="1">
    <location>
        <position position="115"/>
    </location>
    <ligand>
        <name>[4Fe-4S] cluster</name>
        <dbReference type="ChEBI" id="CHEBI:49883"/>
        <note>4Fe-4S-S-AdoMet</note>
    </ligand>
</feature>
<feature type="binding site" evidence="1">
    <location>
        <position position="118"/>
    </location>
    <ligand>
        <name>[4Fe-4S] cluster</name>
        <dbReference type="ChEBI" id="CHEBI:49883"/>
        <note>4Fe-4S-S-AdoMet</note>
    </ligand>
</feature>
<feature type="binding site" evidence="1">
    <location>
        <begin position="157"/>
        <end position="158"/>
    </location>
    <ligand>
        <name>S-adenosyl-L-methionine</name>
        <dbReference type="ChEBI" id="CHEBI:59789"/>
    </ligand>
</feature>
<feature type="binding site" evidence="1">
    <location>
        <position position="189"/>
    </location>
    <ligand>
        <name>S-adenosyl-L-methionine</name>
        <dbReference type="ChEBI" id="CHEBI:59789"/>
    </ligand>
</feature>
<feature type="binding site" evidence="1">
    <location>
        <begin position="212"/>
        <end position="214"/>
    </location>
    <ligand>
        <name>S-adenosyl-L-methionine</name>
        <dbReference type="ChEBI" id="CHEBI:59789"/>
    </ligand>
</feature>
<feature type="binding site" evidence="1">
    <location>
        <position position="288"/>
    </location>
    <ligand>
        <name>S-adenosyl-L-methionine</name>
        <dbReference type="ChEBI" id="CHEBI:59789"/>
    </ligand>
</feature>
<feature type="disulfide bond" description="(transient)" evidence="1">
    <location>
        <begin position="104"/>
        <end position="331"/>
    </location>
</feature>
<gene>
    <name evidence="1" type="primary">rlmN</name>
    <name type="ordered locus">TPASS_0068</name>
</gene>